<gene>
    <name evidence="1" type="primary">tat</name>
</gene>
<accession>P24738</accession>
<organism>
    <name type="scientific">Human immunodeficiency virus type 1 group M subtype A (isolate U455)</name>
    <name type="common">HIV-1</name>
    <dbReference type="NCBI Taxonomy" id="11703"/>
    <lineage>
        <taxon>Viruses</taxon>
        <taxon>Riboviria</taxon>
        <taxon>Pararnavirae</taxon>
        <taxon>Artverviricota</taxon>
        <taxon>Revtraviricetes</taxon>
        <taxon>Ortervirales</taxon>
        <taxon>Retroviridae</taxon>
        <taxon>Orthoretrovirinae</taxon>
        <taxon>Lentivirus</taxon>
        <taxon>Human immunodeficiency virus type 1</taxon>
    </lineage>
</organism>
<evidence type="ECO:0000255" key="1">
    <source>
        <dbReference type="HAMAP-Rule" id="MF_04079"/>
    </source>
</evidence>
<evidence type="ECO:0000256" key="2">
    <source>
        <dbReference type="SAM" id="MobiDB-lite"/>
    </source>
</evidence>
<evidence type="ECO:0000305" key="3"/>
<reference key="1">
    <citation type="journal article" date="1990" name="AIDS Res. Hum. Retroviruses">
        <title>Nucleotide sequence of a Ugandan HIV-1 provirus reveals genetic diversity from other HIV-1 isolates.</title>
        <authorList>
            <person name="Oram J.D."/>
            <person name="Downing R.G."/>
            <person name="Roff M."/>
            <person name="Clegg J.C.S."/>
            <person name="Serwadda D."/>
            <person name="Carswell J.W."/>
        </authorList>
    </citation>
    <scope>NUCLEOTIDE SEQUENCE [GENOMIC DNA]</scope>
</reference>
<reference key="2">
    <citation type="journal article" date="2005" name="Microbes Infect.">
        <title>Decoding Tat: the biology of HIV Tat posttranslational modifications.</title>
        <authorList>
            <person name="Hetzer C."/>
            <person name="Dormeyer W."/>
            <person name="Schnolzer M."/>
            <person name="Ott M."/>
        </authorList>
    </citation>
    <scope>REVIEW</scope>
    <scope>ALTERNATIVE SPLICING</scope>
</reference>
<reference key="3">
    <citation type="journal article" date="2006" name="Front. Biosci.">
        <title>The multiple functions of HIV-1 Tat: proliferation versus apoptosis.</title>
        <authorList>
            <person name="Peruzzi F."/>
        </authorList>
    </citation>
    <scope>REVIEW</scope>
</reference>
<reference key="4">
    <citation type="journal article" date="2006" name="Microbes Infect.">
        <title>HIV tat and neurotoxicity.</title>
        <authorList>
            <person name="King J.E."/>
            <person name="Eugenin E.A."/>
            <person name="Buckner C.M."/>
            <person name="Berman J.W."/>
        </authorList>
    </citation>
    <scope>REVIEW</scope>
</reference>
<keyword id="KW-0007">Acetylation</keyword>
<keyword id="KW-0010">Activator</keyword>
<keyword id="KW-0014">AIDS</keyword>
<keyword id="KW-0025">Alternative splicing</keyword>
<keyword id="KW-0053">Apoptosis</keyword>
<keyword id="KW-1035">Host cytoplasm</keyword>
<keyword id="KW-1048">Host nucleus</keyword>
<keyword id="KW-0945">Host-virus interaction</keyword>
<keyword id="KW-1090">Inhibition of host innate immune response by virus</keyword>
<keyword id="KW-1114">Inhibition of host interferon signaling pathway by virus</keyword>
<keyword id="KW-0922">Interferon antiviral system evasion</keyword>
<keyword id="KW-1017">Isopeptide bond</keyword>
<keyword id="KW-0479">Metal-binding</keyword>
<keyword id="KW-0488">Methylation</keyword>
<keyword id="KW-1122">Modulation of host chromatin by virus</keyword>
<keyword id="KW-1126">Modulation of host PP1 activity by virus</keyword>
<keyword id="KW-0597">Phosphoprotein</keyword>
<keyword id="KW-1185">Reference proteome</keyword>
<keyword id="KW-0694">RNA-binding</keyword>
<keyword id="KW-0964">Secreted</keyword>
<keyword id="KW-0804">Transcription</keyword>
<keyword id="KW-0805">Transcription regulation</keyword>
<keyword id="KW-0832">Ubl conjugation</keyword>
<keyword id="KW-0899">Viral immunoevasion</keyword>
<keyword id="KW-0862">Zinc</keyword>
<feature type="chain" id="PRO_0000085362" description="Protein Tat">
    <location>
        <begin position="1"/>
        <end position="101"/>
    </location>
</feature>
<feature type="region of interest" description="Transactivation" evidence="1">
    <location>
        <begin position="1"/>
        <end position="48"/>
    </location>
</feature>
<feature type="region of interest" description="Interaction with human CREBBP" evidence="1">
    <location>
        <begin position="1"/>
        <end position="24"/>
    </location>
</feature>
<feature type="region of interest" description="Disordered" evidence="2">
    <location>
        <begin position="1"/>
        <end position="20"/>
    </location>
</feature>
<feature type="region of interest" description="Cysteine-rich" evidence="1">
    <location>
        <begin position="22"/>
        <end position="37"/>
    </location>
</feature>
<feature type="region of interest" description="Core" evidence="1">
    <location>
        <begin position="38"/>
        <end position="48"/>
    </location>
</feature>
<feature type="region of interest" description="Disordered" evidence="2">
    <location>
        <begin position="48"/>
        <end position="101"/>
    </location>
</feature>
<feature type="region of interest" description="Interaction with the host capping enzyme RNGTT" evidence="1">
    <location>
        <begin position="49"/>
        <end position="86"/>
    </location>
</feature>
<feature type="short sequence motif" description="Nuclear localization signal, RNA-binding (TAR), and protein transduction" evidence="1">
    <location>
        <begin position="49"/>
        <end position="57"/>
    </location>
</feature>
<feature type="compositionally biased region" description="Basic and acidic residues" evidence="2">
    <location>
        <begin position="85"/>
        <end position="101"/>
    </location>
</feature>
<feature type="binding site" evidence="1">
    <location>
        <position position="22"/>
    </location>
    <ligand>
        <name>Zn(2+)</name>
        <dbReference type="ChEBI" id="CHEBI:29105"/>
        <label>1</label>
    </ligand>
</feature>
<feature type="binding site" evidence="1">
    <location>
        <position position="25"/>
    </location>
    <ligand>
        <name>Zn(2+)</name>
        <dbReference type="ChEBI" id="CHEBI:29105"/>
        <label>2</label>
    </ligand>
</feature>
<feature type="binding site" evidence="1">
    <location>
        <position position="27"/>
    </location>
    <ligand>
        <name>Zn(2+)</name>
        <dbReference type="ChEBI" id="CHEBI:29105"/>
        <label>2</label>
    </ligand>
</feature>
<feature type="binding site" evidence="1">
    <location>
        <position position="30"/>
    </location>
    <ligand>
        <name>Zn(2+)</name>
        <dbReference type="ChEBI" id="CHEBI:29105"/>
        <label>2</label>
    </ligand>
</feature>
<feature type="binding site" evidence="1">
    <location>
        <position position="33"/>
    </location>
    <ligand>
        <name>Zn(2+)</name>
        <dbReference type="ChEBI" id="CHEBI:29105"/>
        <label>1</label>
    </ligand>
</feature>
<feature type="binding site" evidence="1">
    <location>
        <position position="34"/>
    </location>
    <ligand>
        <name>Zn(2+)</name>
        <dbReference type="ChEBI" id="CHEBI:29105"/>
        <label>1</label>
    </ligand>
</feature>
<feature type="binding site" evidence="1">
    <location>
        <position position="37"/>
    </location>
    <ligand>
        <name>Zn(2+)</name>
        <dbReference type="ChEBI" id="CHEBI:29105"/>
        <label>1</label>
    </ligand>
</feature>
<feature type="site" description="Essential for Tat translocation through the endosomal membrane" evidence="1">
    <location>
        <position position="11"/>
    </location>
</feature>
<feature type="modified residue" description="N6-acetyllysine; by host PCAF" evidence="1">
    <location>
        <position position="28"/>
    </location>
</feature>
<feature type="modified residue" description="N6-acetyllysine; by host EP300 and GCN5L2" evidence="1">
    <location>
        <position position="50"/>
    </location>
</feature>
<feature type="modified residue" description="N6-acetyllysine; by host EP300 and GCN5L2" evidence="1">
    <location>
        <position position="51"/>
    </location>
</feature>
<feature type="modified residue" description="Asymmetric dimethylarginine; by host PRMT6" evidence="1">
    <location>
        <position position="52"/>
    </location>
</feature>
<feature type="cross-link" description="Glycyl lysine isopeptide (Lys-Gly) (interchain with G-Cter in ubiquitin)" evidence="1">
    <location>
        <position position="71"/>
    </location>
</feature>
<feature type="splice variant" id="VSP_022429" description="In isoform Short.">
    <location>
        <begin position="73"/>
        <end position="101"/>
    </location>
</feature>
<name>TAT_HV1U4</name>
<organismHost>
    <name type="scientific">Homo sapiens</name>
    <name type="common">Human</name>
    <dbReference type="NCBI Taxonomy" id="9606"/>
</organismHost>
<sequence>MEPVDPNLEPWKHPGSQPTTACSNCYCKVCCWHCQLCFLKKGLGISYGKKKRKPRRGPPQGSKDHQTLIPKQPLPQSQRVSAGQEESKKKVESKAKTDRFA</sequence>
<proteinExistence type="inferred from homology"/>
<protein>
    <recommendedName>
        <fullName evidence="1">Protein Tat</fullName>
    </recommendedName>
    <alternativeName>
        <fullName evidence="1">Transactivating regulatory protein</fullName>
    </alternativeName>
</protein>
<comment type="function">
    <text evidence="1">Transcriptional activator that increases RNA Pol II processivity, thereby increasing the level of full-length viral transcripts. Recognizes a hairpin structure at the 5'-LTR of the nascent viral mRNAs referred to as the transactivation responsive RNA element (TAR) and recruits the cyclin T1-CDK9 complex (P-TEFb complex) that will in turn hyperphosphorylate the RNA polymerase II to allow efficient elongation. The CDK9 component of P-TEFb and other Tat-activated kinases hyperphosphorylate the C-terminus of RNA Pol II that becomes stabilized and much more processive. Other factors such as HTATSF1/Tat-SF1, SUPT5H/SPT5, and HTATIP2 are also important for Tat's function. Besides its effect on RNA Pol II processivity, Tat induces chromatin remodeling of proviral genes by recruiting the histone acetyltransferases (HATs) CREBBP, EP300 and PCAF to the chromatin. This also contributes to the increase in proviral transcription rate, especially when the provirus integrates in transcriptionally silent region of the host genome. To ensure maximal activation of the LTR, Tat mediates nuclear translocation of NF-kappa-B by interacting with host RELA. Through its interaction with host TBP, Tat may also modulate transcription initiation. Tat can reactivate a latently infected cell by penetrating in it and transactivating its LTR promoter. In the cytoplasm, Tat is thought to act as a translational activator of HIV-1 mRNAs.</text>
</comment>
<comment type="function">
    <text evidence="1">Extracellular circulating Tat can be endocytosed by surrounding uninfected cells via the binding to several surface receptors such as CD26, CXCR4, heparan sulfate proteoglycans (HSPG) or LDLR. Neurons are rarely infected, but they internalize Tat via their LDLR. Through its interaction with nuclear HATs, Tat is potentially able to control the acetylation-dependent cellular gene expression. Modulates the expression of many cellular genes involved in cell survival, proliferation or in coding for cytokines or cytokine receptors. Tat plays a role in T-cell and neurons apoptosis. Tat induced neurotoxicity and apoptosis probably contribute to neuroAIDS. Circulating Tat also acts as a chemokine-like and/or growth factor-like molecule that binds to specific receptors on the surface of the cells, affecting many cellular pathways. In the vascular system, Tat binds to ITGAV/ITGB3 and ITGA5/ITGB1 integrins dimers at the surface of endothelial cells and competes with bFGF for heparin-binding sites, leading to an excess of soluble bFGF.</text>
</comment>
<comment type="subunit">
    <text evidence="1">Interacts with host CCNT1. Associates with the P-TEFb complex composed at least of Tat, P-TEFb (CDK9 and CCNT1), TAR RNA, RNA Pol II. Recruits the HATs CREBBP, TAF1/TFIID, EP300, PCAF and GCN5L2. Interacts with host KAT5/Tip60; this interaction targets the latter to degradation. Interacts with the host deacetylase SIRT1. Interacts with host capping enzyme RNGTT; this interaction stimulates RNGTT. Binds to host KDR, and to the host integrins ITGAV/ITGB3 and ITGA5/ITGB1. Interacts with host KPNB1/importin beta-1 without previous binding to KPNA1/importin alpha-1. Interacts with EIF2AK2. Interacts with host nucleosome assembly protein NAP1L1; this interaction may be required for the transport of Tat within the nucleus, since the two proteins interact at the nuclear rim. Interacts with host C1QBP/SF2P32; this interaction involves lysine-acetylated Tat. Interacts with the host chemokine receptors CCR2, CCR3 and CXCR4. Interacts with host DPP4/CD26; this interaction may trigger an anti-proliferative effect. Interacts with host LDLR. Interacts with the host extracellular matrix metalloproteinase MMP1. Interacts with host PRMT6; this interaction mediates Tat's methylation. Interacts with, and is ubiquitinated by MDM2/Hdm2. Interacts with host PSMC3 and HTATIP2. Interacts with STAB1; this interaction may overcome SATB1-mediated repression of IL2 and IL2RA (interleukin) in T cells by binding to the same domain than HDAC1. Interacts (when acetylated) with human CDK13, thereby increasing HIV-1 mRNA splicing and promoting the production of the doubly spliced HIV-1 protein Nef. Interacts with host TBP; this interaction modulates the activity of transcriptional pre-initiation complex. Interacts with host RELA. Interacts with host PLSCR1; this interaction negatively regulates Tat transactivation activity by altering its subcellular distribution.</text>
</comment>
<comment type="subcellular location">
    <subcellularLocation>
        <location evidence="1">Host nucleus</location>
        <location evidence="1">Host nucleolus</location>
    </subcellularLocation>
    <subcellularLocation>
        <location evidence="1">Host cytoplasm</location>
    </subcellularLocation>
    <subcellularLocation>
        <location evidence="1">Secreted</location>
    </subcellularLocation>
    <text evidence="1">Probably localizes to both nuclear and nucleolar compartments. Nuclear localization is mediated through the interaction of the nuclear localization signal with importin KPNB1. Secretion occurs through a Golgi-independent pathway. Tat is released from infected cells to the extracellular space where it remains associated to the cell membrane, or is secreted into the cerebrospinal fluid and sera. Extracellular Tat can be endocytosed by surrounding uninfected cells via binding to several receptors depending on the cell type.</text>
</comment>
<comment type="alternative products">
    <event type="alternative splicing"/>
    <isoform>
        <id>P24738-1</id>
        <name>Long</name>
        <sequence type="displayed"/>
    </isoform>
    <isoform>
        <id>P24738-2</id>
        <name>Short</name>
        <sequence type="described" ref="VSP_022429"/>
    </isoform>
</comment>
<comment type="domain">
    <text evidence="1">The cell attachment site mediates the interaction with ITGAV/ITGB3 and ITGA5/ITGB1 integrins, leading to vascular cell migration and invasion. This interaction also provides endothelial cells with the adhesion signal they require to grow in response to mitogens.</text>
</comment>
<comment type="domain">
    <text evidence="1">The Cys-rich region may bind 2 zinc ions. This region is involved in binding to KAT5.</text>
</comment>
<comment type="domain">
    <text evidence="1">The transactivation domain mediates the interaction with CCNT1, GCN5L2, and MDM2.</text>
</comment>
<comment type="domain">
    <text evidence="1">The Arg-rich RNA-binding region binds the TAR RNA. This region also mediates the nuclear localization through direct binding to KPNB1 and is involved in Tat's transfer across cell membranes (protein transduction). The same region is required for the interaction with EP300, PCAF, EIF2AK2 and KDR.</text>
</comment>
<comment type="PTM">
    <text evidence="1">Asymmetrical arginine methylation by host PRMT6 seems to diminish the transactivation capacity of Tat and affects the interaction with host CCNT1.</text>
</comment>
<comment type="PTM">
    <text evidence="1">Acetylation by EP300, CREBBP, GCN5L2/GCN5 and PCAF regulates the transactivation activity of Tat. EP300-mediated acetylation of Lys-50 promotes dissociation of Tat from the TAR RNA through the competitive binding to PCAF's bromodomain. In addition, the non-acetylated Tat's N-terminus can also interact with PCAF. PCAF-mediated acetylation of Lys-28 enhances Tat's binding to CCNT1. Lys-50 is deacetylated by SIRT1.</text>
</comment>
<comment type="PTM">
    <text evidence="1">Polyubiquitination by host MDM2 does not target Tat to degradation, but activates its transactivation function and fosters interaction with CCNT1 and TAR RNA.</text>
</comment>
<comment type="PTM">
    <text evidence="1">Phosphorylated by EIF2AK2 on serine and threonine residues adjacent to the basic region important for TAR RNA binding and function. Phosphorylation of Tat by EIF2AK2 is dependent on the prior activation of EIF2AK2 by dsRNA.</text>
</comment>
<comment type="miscellaneous">
    <text evidence="1">HIV-1 lineages are divided in three main groups, M (for Major), O (for Outlier), and N (for New, or Non-M, Non-O). The vast majority of strains found worldwide belong to the group M. Group O seems to be endemic to and largely confined to Cameroon and neighboring countries in West Central Africa, where these viruses represent a small minority of HIV-1 strains. The group N is represented by a limited number of isolates from Cameroonian persons. The group M is further subdivided in 9 clades or subtypes (A to D, F to H, J and K).</text>
</comment>
<comment type="miscellaneous">
    <molecule>Isoform Short</molecule>
    <text evidence="3">Expressed in the late stage of the infection cycle, when unspliced viral RNAs are exported to the cytoplasm by the viral Rev protein.</text>
</comment>
<comment type="similarity">
    <text evidence="1">Belongs to the lentiviruses Tat family.</text>
</comment>
<dbReference type="EMBL" id="M62320">
    <property type="protein sequence ID" value="AAA75021.1"/>
    <property type="molecule type" value="Genomic_DNA"/>
</dbReference>
<dbReference type="SMR" id="P24738"/>
<dbReference type="Proteomes" id="UP000134285">
    <property type="component" value="Segment"/>
</dbReference>
<dbReference type="GO" id="GO:0005576">
    <property type="term" value="C:extracellular region"/>
    <property type="evidence" value="ECO:0007669"/>
    <property type="project" value="UniProtKB-SubCell"/>
</dbReference>
<dbReference type="GO" id="GO:0030430">
    <property type="term" value="C:host cell cytoplasm"/>
    <property type="evidence" value="ECO:0007669"/>
    <property type="project" value="UniProtKB-SubCell"/>
</dbReference>
<dbReference type="GO" id="GO:0044196">
    <property type="term" value="C:host cell nucleolus"/>
    <property type="evidence" value="ECO:0007669"/>
    <property type="project" value="UniProtKB-SubCell"/>
</dbReference>
<dbReference type="GO" id="GO:0042805">
    <property type="term" value="F:actinin binding"/>
    <property type="evidence" value="ECO:0007669"/>
    <property type="project" value="UniProtKB-UniRule"/>
</dbReference>
<dbReference type="GO" id="GO:0030332">
    <property type="term" value="F:cyclin binding"/>
    <property type="evidence" value="ECO:0007669"/>
    <property type="project" value="UniProtKB-UniRule"/>
</dbReference>
<dbReference type="GO" id="GO:0046872">
    <property type="term" value="F:metal ion binding"/>
    <property type="evidence" value="ECO:0007669"/>
    <property type="project" value="UniProtKB-UniRule"/>
</dbReference>
<dbReference type="GO" id="GO:0019904">
    <property type="term" value="F:protein domain specific binding"/>
    <property type="evidence" value="ECO:0007669"/>
    <property type="project" value="UniProtKB-UniRule"/>
</dbReference>
<dbReference type="GO" id="GO:0004865">
    <property type="term" value="F:protein serine/threonine phosphatase inhibitor activity"/>
    <property type="evidence" value="ECO:0007669"/>
    <property type="project" value="UniProtKB-KW"/>
</dbReference>
<dbReference type="GO" id="GO:0001070">
    <property type="term" value="F:RNA-binding transcription regulator activity"/>
    <property type="evidence" value="ECO:0007669"/>
    <property type="project" value="UniProtKB-UniRule"/>
</dbReference>
<dbReference type="GO" id="GO:1990970">
    <property type="term" value="F:trans-activation response element binding"/>
    <property type="evidence" value="ECO:0007669"/>
    <property type="project" value="UniProtKB-UniRule"/>
</dbReference>
<dbReference type="GO" id="GO:0006351">
    <property type="term" value="P:DNA-templated transcription"/>
    <property type="evidence" value="ECO:0007669"/>
    <property type="project" value="UniProtKB-UniRule"/>
</dbReference>
<dbReference type="GO" id="GO:0032968">
    <property type="term" value="P:positive regulation of transcription elongation by RNA polymerase II"/>
    <property type="evidence" value="ECO:0007669"/>
    <property type="project" value="UniProtKB-UniRule"/>
</dbReference>
<dbReference type="GO" id="GO:0050434">
    <property type="term" value="P:positive regulation of viral transcription"/>
    <property type="evidence" value="ECO:0007669"/>
    <property type="project" value="UniProtKB-UniRule"/>
</dbReference>
<dbReference type="GO" id="GO:0039525">
    <property type="term" value="P:symbiont-mediated perturbation of host chromatin organization"/>
    <property type="evidence" value="ECO:0007669"/>
    <property type="project" value="UniProtKB-UniRule"/>
</dbReference>
<dbReference type="GO" id="GO:0052170">
    <property type="term" value="P:symbiont-mediated suppression of host innate immune response"/>
    <property type="evidence" value="ECO:0007669"/>
    <property type="project" value="UniProtKB-KW"/>
</dbReference>
<dbReference type="GO" id="GO:0039606">
    <property type="term" value="P:symbiont-mediated suppression of host translation initiation"/>
    <property type="evidence" value="ECO:0007669"/>
    <property type="project" value="UniProtKB-KW"/>
</dbReference>
<dbReference type="GO" id="GO:0039502">
    <property type="term" value="P:symbiont-mediated suppression of host type I interferon-mediated signaling pathway"/>
    <property type="evidence" value="ECO:0007669"/>
    <property type="project" value="UniProtKB-UniRule"/>
</dbReference>
<dbReference type="Gene3D" id="4.10.20.10">
    <property type="entry name" value="Tat domain"/>
    <property type="match status" value="1"/>
</dbReference>
<dbReference type="HAMAP" id="MF_04079">
    <property type="entry name" value="HIV_TAT"/>
    <property type="match status" value="1"/>
</dbReference>
<dbReference type="InterPro" id="IPR001831">
    <property type="entry name" value="IV_Tat"/>
</dbReference>
<dbReference type="InterPro" id="IPR036963">
    <property type="entry name" value="Tat_dom_sf"/>
</dbReference>
<dbReference type="Pfam" id="PF00539">
    <property type="entry name" value="Tat"/>
    <property type="match status" value="1"/>
</dbReference>
<dbReference type="PRINTS" id="PR00055">
    <property type="entry name" value="HIVTATDOMAIN"/>
</dbReference>